<comment type="function">
    <text evidence="1">Acts as a ribosome collision sensor. Detects stalled/collided disomes (pairs of ribosomes where the leading ribosome is stalled and a second ribosome has collided with it) and endonucleolytically cleaves mRNA at the 5' boundary of the stalled ribosome. Stalled/collided disomes form a new interface (primarily via the 30S subunits) that binds SmrB. Cleaved mRNA becomes available for tmRNA ligation, leading to ribosomal subunit dissociation and rescue of stalled ribosomes.</text>
</comment>
<comment type="subunit">
    <text evidence="1">Associates with collided ribosomes, but not with correctly translating polysomes.</text>
</comment>
<comment type="similarity">
    <text evidence="1">Belongs to the SmrB family.</text>
</comment>
<accession>Q1R981</accession>
<keyword id="KW-0255">Endonuclease</keyword>
<keyword id="KW-0378">Hydrolase</keyword>
<keyword id="KW-0540">Nuclease</keyword>
<keyword id="KW-0694">RNA-binding</keyword>
<keyword id="KW-0699">rRNA-binding</keyword>
<evidence type="ECO:0000255" key="1">
    <source>
        <dbReference type="HAMAP-Rule" id="MF_01042"/>
    </source>
</evidence>
<proteinExistence type="inferred from homology"/>
<reference key="1">
    <citation type="journal article" date="2006" name="Proc. Natl. Acad. Sci. U.S.A.">
        <title>Identification of genes subject to positive selection in uropathogenic strains of Escherichia coli: a comparative genomics approach.</title>
        <authorList>
            <person name="Chen S.L."/>
            <person name="Hung C.-S."/>
            <person name="Xu J."/>
            <person name="Reigstad C.S."/>
            <person name="Magrini V."/>
            <person name="Sabo A."/>
            <person name="Blasiar D."/>
            <person name="Bieri T."/>
            <person name="Meyer R.R."/>
            <person name="Ozersky P."/>
            <person name="Armstrong J.R."/>
            <person name="Fulton R.S."/>
            <person name="Latreille J.P."/>
            <person name="Spieth J."/>
            <person name="Hooton T.M."/>
            <person name="Mardis E.R."/>
            <person name="Hultgren S.J."/>
            <person name="Gordon J.I."/>
        </authorList>
    </citation>
    <scope>NUCLEOTIDE SEQUENCE [LARGE SCALE GENOMIC DNA]</scope>
    <source>
        <strain>UTI89 / UPEC</strain>
    </source>
</reference>
<feature type="chain" id="PRO_1000084350" description="Ribosome rescue factor SmrB">
    <location>
        <begin position="1"/>
        <end position="183"/>
    </location>
</feature>
<feature type="domain" description="Smr" evidence="1">
    <location>
        <begin position="98"/>
        <end position="173"/>
    </location>
</feature>
<name>SMRB_ECOUT</name>
<dbReference type="EC" id="3.1.-.-" evidence="1"/>
<dbReference type="EMBL" id="CP000243">
    <property type="protein sequence ID" value="ABE08083.1"/>
    <property type="molecule type" value="Genomic_DNA"/>
</dbReference>
<dbReference type="RefSeq" id="WP_000730806.1">
    <property type="nucleotide sequence ID" value="NZ_CP064825.1"/>
</dbReference>
<dbReference type="SMR" id="Q1R981"/>
<dbReference type="GeneID" id="93774844"/>
<dbReference type="KEGG" id="eci:UTI89_C2616"/>
<dbReference type="HOGENOM" id="CLU_055978_4_0_6"/>
<dbReference type="Proteomes" id="UP000001952">
    <property type="component" value="Chromosome"/>
</dbReference>
<dbReference type="GO" id="GO:0004521">
    <property type="term" value="F:RNA endonuclease activity"/>
    <property type="evidence" value="ECO:0007669"/>
    <property type="project" value="UniProtKB-UniRule"/>
</dbReference>
<dbReference type="GO" id="GO:0019843">
    <property type="term" value="F:rRNA binding"/>
    <property type="evidence" value="ECO:0007669"/>
    <property type="project" value="UniProtKB-UniRule"/>
</dbReference>
<dbReference type="GO" id="GO:0072344">
    <property type="term" value="P:rescue of stalled ribosome"/>
    <property type="evidence" value="ECO:0007669"/>
    <property type="project" value="UniProtKB-UniRule"/>
</dbReference>
<dbReference type="Gene3D" id="3.30.1370.110">
    <property type="match status" value="1"/>
</dbReference>
<dbReference type="HAMAP" id="MF_01042">
    <property type="entry name" value="SmrB"/>
    <property type="match status" value="1"/>
</dbReference>
<dbReference type="InterPro" id="IPR002625">
    <property type="entry name" value="Smr_dom"/>
</dbReference>
<dbReference type="InterPro" id="IPR036063">
    <property type="entry name" value="Smr_dom_sf"/>
</dbReference>
<dbReference type="InterPro" id="IPR022990">
    <property type="entry name" value="SmrB-like"/>
</dbReference>
<dbReference type="NCBIfam" id="NF003432">
    <property type="entry name" value="PRK04946.1"/>
    <property type="match status" value="1"/>
</dbReference>
<dbReference type="PANTHER" id="PTHR35562">
    <property type="entry name" value="DNA ENDONUCLEASE SMRA-RELATED"/>
    <property type="match status" value="1"/>
</dbReference>
<dbReference type="PANTHER" id="PTHR35562:SF1">
    <property type="entry name" value="UPF0115 PROTEIN YFCN"/>
    <property type="match status" value="1"/>
</dbReference>
<dbReference type="Pfam" id="PF01713">
    <property type="entry name" value="Smr"/>
    <property type="match status" value="1"/>
</dbReference>
<dbReference type="SMART" id="SM00463">
    <property type="entry name" value="SMR"/>
    <property type="match status" value="1"/>
</dbReference>
<dbReference type="SUPFAM" id="SSF160443">
    <property type="entry name" value="SMR domain-like"/>
    <property type="match status" value="1"/>
</dbReference>
<dbReference type="PROSITE" id="PS50828">
    <property type="entry name" value="SMR"/>
    <property type="match status" value="1"/>
</dbReference>
<sequence length="183" mass="21013">MKKKTTLSEEDQALFRQLMAGTRKIKQDTIVHRPQRKKISEVPVKRLIQEQADASHYFSDEFQPLLNTEGPVKYVRPDVSHFEAKKLRRGDYSPELFLDLHGLTQLQAKQELGALIAACRREHVFCACVMHGHGKHILKQQTPLWLAQHPHVMAFHQAPKEYGGDAALLVLIEVEEWLPPELP</sequence>
<protein>
    <recommendedName>
        <fullName evidence="1">Ribosome rescue factor SmrB</fullName>
        <ecNumber evidence="1">3.1.-.-</ecNumber>
    </recommendedName>
</protein>
<gene>
    <name evidence="1" type="primary">smrB</name>
    <name type="ordered locus">UTI89_C2616</name>
</gene>
<organism>
    <name type="scientific">Escherichia coli (strain UTI89 / UPEC)</name>
    <dbReference type="NCBI Taxonomy" id="364106"/>
    <lineage>
        <taxon>Bacteria</taxon>
        <taxon>Pseudomonadati</taxon>
        <taxon>Pseudomonadota</taxon>
        <taxon>Gammaproteobacteria</taxon>
        <taxon>Enterobacterales</taxon>
        <taxon>Enterobacteriaceae</taxon>
        <taxon>Escherichia</taxon>
    </lineage>
</organism>